<comment type="similarity">
    <text evidence="1">Belongs to the UPF0303 family.</text>
</comment>
<reference key="1">
    <citation type="submission" date="2008-10" db="EMBL/GenBank/DDBJ databases">
        <title>Genome sequence of Bacillus cereus AH820.</title>
        <authorList>
            <person name="Dodson R.J."/>
            <person name="Durkin A.S."/>
            <person name="Rosovitz M.J."/>
            <person name="Rasko D.A."/>
            <person name="Hoffmaster A."/>
            <person name="Ravel J."/>
            <person name="Sutton G."/>
        </authorList>
    </citation>
    <scope>NUCLEOTIDE SEQUENCE [LARGE SCALE GENOMIC DNA]</scope>
    <source>
        <strain>AH820</strain>
    </source>
</reference>
<organism>
    <name type="scientific">Bacillus cereus (strain AH820)</name>
    <dbReference type="NCBI Taxonomy" id="405535"/>
    <lineage>
        <taxon>Bacteria</taxon>
        <taxon>Bacillati</taxon>
        <taxon>Bacillota</taxon>
        <taxon>Bacilli</taxon>
        <taxon>Bacillales</taxon>
        <taxon>Bacillaceae</taxon>
        <taxon>Bacillus</taxon>
        <taxon>Bacillus cereus group</taxon>
    </lineage>
</organism>
<proteinExistence type="inferred from homology"/>
<feature type="chain" id="PRO_1000198317" description="UPF0303 protein BCAH820_3413">
    <location>
        <begin position="1"/>
        <end position="158"/>
    </location>
</feature>
<accession>B7JG75</accession>
<evidence type="ECO:0000255" key="1">
    <source>
        <dbReference type="HAMAP-Rule" id="MF_00761"/>
    </source>
</evidence>
<protein>
    <recommendedName>
        <fullName evidence="1">UPF0303 protein BCAH820_3413</fullName>
    </recommendedName>
</protein>
<gene>
    <name type="ordered locus">BCAH820_3413</name>
</gene>
<name>Y3413_BACC0</name>
<dbReference type="EMBL" id="CP001283">
    <property type="protein sequence ID" value="ACK88812.1"/>
    <property type="molecule type" value="Genomic_DNA"/>
</dbReference>
<dbReference type="SMR" id="B7JG75"/>
<dbReference type="KEGG" id="bcu:BCAH820_3413"/>
<dbReference type="HOGENOM" id="CLU_101036_2_0_9"/>
<dbReference type="Proteomes" id="UP000001363">
    <property type="component" value="Chromosome"/>
</dbReference>
<dbReference type="FunFam" id="3.30.450.150:FF:000002">
    <property type="entry name" value="UPF0303 protein BCAH820_3413"/>
    <property type="match status" value="1"/>
</dbReference>
<dbReference type="Gene3D" id="3.30.450.150">
    <property type="entry name" value="Haem-degrading domain"/>
    <property type="match status" value="1"/>
</dbReference>
<dbReference type="HAMAP" id="MF_00761">
    <property type="entry name" value="UPF0303"/>
    <property type="match status" value="1"/>
</dbReference>
<dbReference type="InterPro" id="IPR005624">
    <property type="entry name" value="PduO/GlcC-like"/>
</dbReference>
<dbReference type="InterPro" id="IPR038084">
    <property type="entry name" value="PduO/GlcC-like_sf"/>
</dbReference>
<dbReference type="InterPro" id="IPR010371">
    <property type="entry name" value="YBR137W-like"/>
</dbReference>
<dbReference type="NCBIfam" id="NF002692">
    <property type="entry name" value="PRK02487.1-1"/>
    <property type="match status" value="1"/>
</dbReference>
<dbReference type="NCBIfam" id="NF002696">
    <property type="entry name" value="PRK02487.1-5"/>
    <property type="match status" value="1"/>
</dbReference>
<dbReference type="PANTHER" id="PTHR28255">
    <property type="match status" value="1"/>
</dbReference>
<dbReference type="PANTHER" id="PTHR28255:SF1">
    <property type="entry name" value="UPF0303 PROTEIN YBR137W"/>
    <property type="match status" value="1"/>
</dbReference>
<dbReference type="Pfam" id="PF03928">
    <property type="entry name" value="HbpS-like"/>
    <property type="match status" value="1"/>
</dbReference>
<dbReference type="PIRSF" id="PIRSF008757">
    <property type="entry name" value="UCP008757"/>
    <property type="match status" value="1"/>
</dbReference>
<dbReference type="SUPFAM" id="SSF143744">
    <property type="entry name" value="GlcG-like"/>
    <property type="match status" value="1"/>
</dbReference>
<sequence length="158" mass="17913">MSASNLNEISKQILKEEETLQFSSFTNEDALQLGLFIVETAKQEGKVIAVDITKNGVQLFHFKMTGTNEENTKWIERKKRVVSLHDRSSYYMQIQSEITGISYNEKYLLNTSEYAAFGGCFPIRIKDVGVIGMITVSGLPPEKDHELVIRAVKNHLNQ</sequence>